<feature type="chain" id="PRO_1000021564" description="Histidine ammonia-lyase">
    <location>
        <begin position="1"/>
        <end position="509"/>
    </location>
</feature>
<feature type="modified residue" description="2,3-didehydroalanine (Ser)" evidence="1">
    <location>
        <position position="145"/>
    </location>
</feature>
<feature type="cross-link" description="5-imidazolinone (Ala-Gly)" evidence="1">
    <location>
        <begin position="144"/>
        <end position="146"/>
    </location>
</feature>
<proteinExistence type="inferred from homology"/>
<dbReference type="EC" id="4.3.1.3" evidence="1"/>
<dbReference type="EMBL" id="CP000388">
    <property type="protein sequence ID" value="ABG39548.1"/>
    <property type="molecule type" value="Genomic_DNA"/>
</dbReference>
<dbReference type="RefSeq" id="WP_011573889.1">
    <property type="nucleotide sequence ID" value="NC_008228.1"/>
</dbReference>
<dbReference type="SMR" id="Q15X40"/>
<dbReference type="STRING" id="342610.Patl_1022"/>
<dbReference type="KEGG" id="pat:Patl_1022"/>
<dbReference type="eggNOG" id="COG2986">
    <property type="taxonomic scope" value="Bacteria"/>
</dbReference>
<dbReference type="HOGENOM" id="CLU_014801_4_0_6"/>
<dbReference type="OrthoDB" id="9806955at2"/>
<dbReference type="UniPathway" id="UPA00379">
    <property type="reaction ID" value="UER00549"/>
</dbReference>
<dbReference type="Proteomes" id="UP000001981">
    <property type="component" value="Chromosome"/>
</dbReference>
<dbReference type="GO" id="GO:0005737">
    <property type="term" value="C:cytoplasm"/>
    <property type="evidence" value="ECO:0007669"/>
    <property type="project" value="UniProtKB-SubCell"/>
</dbReference>
<dbReference type="GO" id="GO:0004397">
    <property type="term" value="F:histidine ammonia-lyase activity"/>
    <property type="evidence" value="ECO:0007669"/>
    <property type="project" value="UniProtKB-UniRule"/>
</dbReference>
<dbReference type="GO" id="GO:0019556">
    <property type="term" value="P:L-histidine catabolic process to glutamate and formamide"/>
    <property type="evidence" value="ECO:0007669"/>
    <property type="project" value="UniProtKB-UniPathway"/>
</dbReference>
<dbReference type="GO" id="GO:0019557">
    <property type="term" value="P:L-histidine catabolic process to glutamate and formate"/>
    <property type="evidence" value="ECO:0007669"/>
    <property type="project" value="UniProtKB-UniPathway"/>
</dbReference>
<dbReference type="CDD" id="cd00332">
    <property type="entry name" value="PAL-HAL"/>
    <property type="match status" value="1"/>
</dbReference>
<dbReference type="FunFam" id="1.10.275.10:FF:000005">
    <property type="entry name" value="Histidine ammonia-lyase"/>
    <property type="match status" value="1"/>
</dbReference>
<dbReference type="FunFam" id="1.20.200.10:FF:000003">
    <property type="entry name" value="Histidine ammonia-lyase"/>
    <property type="match status" value="1"/>
</dbReference>
<dbReference type="Gene3D" id="1.20.200.10">
    <property type="entry name" value="Fumarase/aspartase (Central domain)"/>
    <property type="match status" value="1"/>
</dbReference>
<dbReference type="Gene3D" id="1.10.275.10">
    <property type="entry name" value="Fumarase/aspartase (N-terminal domain)"/>
    <property type="match status" value="1"/>
</dbReference>
<dbReference type="HAMAP" id="MF_00229">
    <property type="entry name" value="His_ammonia_lyase"/>
    <property type="match status" value="1"/>
</dbReference>
<dbReference type="InterPro" id="IPR001106">
    <property type="entry name" value="Aromatic_Lyase"/>
</dbReference>
<dbReference type="InterPro" id="IPR024083">
    <property type="entry name" value="Fumarase/histidase_N"/>
</dbReference>
<dbReference type="InterPro" id="IPR005921">
    <property type="entry name" value="HutH"/>
</dbReference>
<dbReference type="InterPro" id="IPR008948">
    <property type="entry name" value="L-Aspartase-like"/>
</dbReference>
<dbReference type="InterPro" id="IPR022313">
    <property type="entry name" value="Phe/His_NH3-lyase_AS"/>
</dbReference>
<dbReference type="NCBIfam" id="TIGR01225">
    <property type="entry name" value="hutH"/>
    <property type="match status" value="1"/>
</dbReference>
<dbReference type="NCBIfam" id="NF006871">
    <property type="entry name" value="PRK09367.1"/>
    <property type="match status" value="1"/>
</dbReference>
<dbReference type="PANTHER" id="PTHR10362">
    <property type="entry name" value="HISTIDINE AMMONIA-LYASE"/>
    <property type="match status" value="1"/>
</dbReference>
<dbReference type="Pfam" id="PF00221">
    <property type="entry name" value="Lyase_aromatic"/>
    <property type="match status" value="1"/>
</dbReference>
<dbReference type="SUPFAM" id="SSF48557">
    <property type="entry name" value="L-aspartase-like"/>
    <property type="match status" value="1"/>
</dbReference>
<dbReference type="PROSITE" id="PS00488">
    <property type="entry name" value="PAL_HISTIDASE"/>
    <property type="match status" value="1"/>
</dbReference>
<evidence type="ECO:0000255" key="1">
    <source>
        <dbReference type="HAMAP-Rule" id="MF_00229"/>
    </source>
</evidence>
<gene>
    <name evidence="1" type="primary">hutH</name>
    <name type="ordered locus">Patl_1022</name>
</gene>
<keyword id="KW-0963">Cytoplasm</keyword>
<keyword id="KW-0369">Histidine metabolism</keyword>
<keyword id="KW-0456">Lyase</keyword>
<protein>
    <recommendedName>
        <fullName evidence="1">Histidine ammonia-lyase</fullName>
        <shortName evidence="1">Histidase</shortName>
        <ecNumber evidence="1">4.3.1.3</ecNumber>
    </recommendedName>
</protein>
<reference key="1">
    <citation type="submission" date="2006-06" db="EMBL/GenBank/DDBJ databases">
        <title>Complete sequence of Pseudoalteromonas atlantica T6c.</title>
        <authorList>
            <consortium name="US DOE Joint Genome Institute"/>
            <person name="Copeland A."/>
            <person name="Lucas S."/>
            <person name="Lapidus A."/>
            <person name="Barry K."/>
            <person name="Detter J.C."/>
            <person name="Glavina del Rio T."/>
            <person name="Hammon N."/>
            <person name="Israni S."/>
            <person name="Dalin E."/>
            <person name="Tice H."/>
            <person name="Pitluck S."/>
            <person name="Saunders E."/>
            <person name="Brettin T."/>
            <person name="Bruce D."/>
            <person name="Han C."/>
            <person name="Tapia R."/>
            <person name="Gilna P."/>
            <person name="Schmutz J."/>
            <person name="Larimer F."/>
            <person name="Land M."/>
            <person name="Hauser L."/>
            <person name="Kyrpides N."/>
            <person name="Kim E."/>
            <person name="Karls A.C."/>
            <person name="Bartlett D."/>
            <person name="Higgins B.P."/>
            <person name="Richardson P."/>
        </authorList>
    </citation>
    <scope>NUCLEOTIDE SEQUENCE [LARGE SCALE GENOMIC DNA]</scope>
    <source>
        <strain>T6c / ATCC BAA-1087</strain>
    </source>
</reference>
<comment type="catalytic activity">
    <reaction evidence="1">
        <text>L-histidine = trans-urocanate + NH4(+)</text>
        <dbReference type="Rhea" id="RHEA:21232"/>
        <dbReference type="ChEBI" id="CHEBI:17771"/>
        <dbReference type="ChEBI" id="CHEBI:28938"/>
        <dbReference type="ChEBI" id="CHEBI:57595"/>
        <dbReference type="EC" id="4.3.1.3"/>
    </reaction>
</comment>
<comment type="pathway">
    <text evidence="1">Amino-acid degradation; L-histidine degradation into L-glutamate; N-formimidoyl-L-glutamate from L-histidine: step 1/3.</text>
</comment>
<comment type="subcellular location">
    <subcellularLocation>
        <location evidence="1">Cytoplasm</location>
    </subcellularLocation>
</comment>
<comment type="PTM">
    <text evidence="1">Contains an active site 4-methylidene-imidazol-5-one (MIO), which is formed autocatalytically by cyclization and dehydration of residues Ala-Ser-Gly.</text>
</comment>
<comment type="similarity">
    <text evidence="1">Belongs to the PAL/histidase family.</text>
</comment>
<accession>Q15X40</accession>
<name>HUTH_PSEA6</name>
<sequence>MEQKYLLQPGKLTIETMRQVHRRHVPITLAPDSFERIHSAEQTVRDVITQGRTVYGINTGFGLLANTKIEVDELELLQRSIVLSHAAGIGTLMSASTVRLLMLLKINSLARGYSGIRLIVIEALIALYNHQVYPAIPEKGSVGASGDLAPLAHMSAVLLGEGEVIYQGNQISAEKGLMIAGLQPISLAPKEGLALLNGTQASTAFALQGLFYAENALTSSIAIGALSVDAALGSRVPFNERIHIVRGHQAQIDVATGFRTLLQESEIGKSHGGCEKVQDPYSLRCQPQVMGACLQQMRFAKQILVTEANGVSDNPIVFSESDDVLSGGNFHAETVAMAADMLAIALAEIGALSERRMALLIDSSLSGLPPFLVDNGGVNSGFMIAQVTSAALASENKSYAHPASIDSLPTSANQEDHVSMATFAGRRLRDIFDNVAGILAIEWLAASQGIDFRFPLKTSTQLQSVHALMRSKVTFYDKDRYFSPDIEQAKLLITRHSLSDLVQQDIQLL</sequence>
<organism>
    <name type="scientific">Pseudoalteromonas atlantica (strain T6c / ATCC BAA-1087)</name>
    <dbReference type="NCBI Taxonomy" id="3042615"/>
    <lineage>
        <taxon>Bacteria</taxon>
        <taxon>Pseudomonadati</taxon>
        <taxon>Pseudomonadota</taxon>
        <taxon>Gammaproteobacteria</taxon>
        <taxon>Alteromonadales</taxon>
        <taxon>Alteromonadaceae</taxon>
        <taxon>Paraglaciecola</taxon>
    </lineage>
</organism>